<gene>
    <name evidence="1" type="primary">tsf</name>
    <name type="ordered locus">GTNG_1104</name>
</gene>
<feature type="chain" id="PRO_1000006099" description="Elongation factor Ts">
    <location>
        <begin position="1"/>
        <end position="294"/>
    </location>
</feature>
<feature type="region of interest" description="Involved in Mg(2+) ion dislocation from EF-Tu" evidence="1">
    <location>
        <begin position="79"/>
        <end position="82"/>
    </location>
</feature>
<protein>
    <recommendedName>
        <fullName evidence="1">Elongation factor Ts</fullName>
        <shortName evidence="1">EF-Ts</shortName>
    </recommendedName>
</protein>
<accession>A4IMC4</accession>
<organism>
    <name type="scientific">Geobacillus thermodenitrificans (strain NG80-2)</name>
    <dbReference type="NCBI Taxonomy" id="420246"/>
    <lineage>
        <taxon>Bacteria</taxon>
        <taxon>Bacillati</taxon>
        <taxon>Bacillota</taxon>
        <taxon>Bacilli</taxon>
        <taxon>Bacillales</taxon>
        <taxon>Anoxybacillaceae</taxon>
        <taxon>Geobacillus</taxon>
    </lineage>
</organism>
<sequence>MAITAQMVKELREKTGAGMMDCKKALTETNGDMEKAIDWLREKGIAKAAKKADRIAAEGMTYIATEGNAAVILEVNSETDFVAKNEAFQTLVKELAAHLLKQKPATLDEALGQTMSSGSTVQDYINEAVAKIGEKITLRRFAVVNKADDETFGAYLHMGGRIGVLTLLAGSATEEVAKDVAMHIAALHPKYVSRDEVPQEEIAREREVLKQQALNEGKPENIVEKMVEGRLKKFYEDVCLLEQAFVKNPDVTVRQYVESSGATVKQFIRYEVGEGLEKRQDNFAEEVMSQVRKQ</sequence>
<name>EFTS_GEOTN</name>
<proteinExistence type="inferred from homology"/>
<keyword id="KW-0963">Cytoplasm</keyword>
<keyword id="KW-0251">Elongation factor</keyword>
<keyword id="KW-0648">Protein biosynthesis</keyword>
<dbReference type="EMBL" id="CP000557">
    <property type="protein sequence ID" value="ABO66478.1"/>
    <property type="molecule type" value="Genomic_DNA"/>
</dbReference>
<dbReference type="RefSeq" id="WP_008878558.1">
    <property type="nucleotide sequence ID" value="NC_009328.1"/>
</dbReference>
<dbReference type="SMR" id="A4IMC4"/>
<dbReference type="KEGG" id="gtn:GTNG_1104"/>
<dbReference type="eggNOG" id="COG0264">
    <property type="taxonomic scope" value="Bacteria"/>
</dbReference>
<dbReference type="HOGENOM" id="CLU_047155_0_2_9"/>
<dbReference type="Proteomes" id="UP000001578">
    <property type="component" value="Chromosome"/>
</dbReference>
<dbReference type="GO" id="GO:0005737">
    <property type="term" value="C:cytoplasm"/>
    <property type="evidence" value="ECO:0007669"/>
    <property type="project" value="UniProtKB-SubCell"/>
</dbReference>
<dbReference type="GO" id="GO:0003746">
    <property type="term" value="F:translation elongation factor activity"/>
    <property type="evidence" value="ECO:0007669"/>
    <property type="project" value="UniProtKB-UniRule"/>
</dbReference>
<dbReference type="CDD" id="cd14275">
    <property type="entry name" value="UBA_EF-Ts"/>
    <property type="match status" value="1"/>
</dbReference>
<dbReference type="FunFam" id="1.10.286.20:FF:000003">
    <property type="entry name" value="Elongation factor Ts"/>
    <property type="match status" value="1"/>
</dbReference>
<dbReference type="FunFam" id="1.10.8.10:FF:000001">
    <property type="entry name" value="Elongation factor Ts"/>
    <property type="match status" value="1"/>
</dbReference>
<dbReference type="Gene3D" id="1.10.286.20">
    <property type="match status" value="1"/>
</dbReference>
<dbReference type="Gene3D" id="1.10.8.10">
    <property type="entry name" value="DNA helicase RuvA subunit, C-terminal domain"/>
    <property type="match status" value="1"/>
</dbReference>
<dbReference type="Gene3D" id="3.30.479.20">
    <property type="entry name" value="Elongation factor Ts, dimerisation domain"/>
    <property type="match status" value="2"/>
</dbReference>
<dbReference type="HAMAP" id="MF_00050">
    <property type="entry name" value="EF_Ts"/>
    <property type="match status" value="1"/>
</dbReference>
<dbReference type="InterPro" id="IPR036402">
    <property type="entry name" value="EF-Ts_dimer_sf"/>
</dbReference>
<dbReference type="InterPro" id="IPR001816">
    <property type="entry name" value="Transl_elong_EFTs/EF1B"/>
</dbReference>
<dbReference type="InterPro" id="IPR014039">
    <property type="entry name" value="Transl_elong_EFTs/EF1B_dimer"/>
</dbReference>
<dbReference type="InterPro" id="IPR018101">
    <property type="entry name" value="Transl_elong_Ts_CS"/>
</dbReference>
<dbReference type="InterPro" id="IPR009060">
    <property type="entry name" value="UBA-like_sf"/>
</dbReference>
<dbReference type="NCBIfam" id="TIGR00116">
    <property type="entry name" value="tsf"/>
    <property type="match status" value="1"/>
</dbReference>
<dbReference type="PANTHER" id="PTHR11741">
    <property type="entry name" value="ELONGATION FACTOR TS"/>
    <property type="match status" value="1"/>
</dbReference>
<dbReference type="PANTHER" id="PTHR11741:SF0">
    <property type="entry name" value="ELONGATION FACTOR TS, MITOCHONDRIAL"/>
    <property type="match status" value="1"/>
</dbReference>
<dbReference type="Pfam" id="PF25025">
    <property type="entry name" value="EF-Ts_N"/>
    <property type="match status" value="1"/>
</dbReference>
<dbReference type="Pfam" id="PF00889">
    <property type="entry name" value="EF_TS"/>
    <property type="match status" value="1"/>
</dbReference>
<dbReference type="SUPFAM" id="SSF54713">
    <property type="entry name" value="Elongation factor Ts (EF-Ts), dimerisation domain"/>
    <property type="match status" value="2"/>
</dbReference>
<dbReference type="SUPFAM" id="SSF46934">
    <property type="entry name" value="UBA-like"/>
    <property type="match status" value="1"/>
</dbReference>
<dbReference type="PROSITE" id="PS01126">
    <property type="entry name" value="EF_TS_1"/>
    <property type="match status" value="1"/>
</dbReference>
<dbReference type="PROSITE" id="PS01127">
    <property type="entry name" value="EF_TS_2"/>
    <property type="match status" value="1"/>
</dbReference>
<reference key="1">
    <citation type="journal article" date="2007" name="Proc. Natl. Acad. Sci. U.S.A.">
        <title>Genome and proteome of long-chain alkane degrading Geobacillus thermodenitrificans NG80-2 isolated from a deep-subsurface oil reservoir.</title>
        <authorList>
            <person name="Feng L."/>
            <person name="Wang W."/>
            <person name="Cheng J."/>
            <person name="Ren Y."/>
            <person name="Zhao G."/>
            <person name="Gao C."/>
            <person name="Tang Y."/>
            <person name="Liu X."/>
            <person name="Han W."/>
            <person name="Peng X."/>
            <person name="Liu R."/>
            <person name="Wang L."/>
        </authorList>
    </citation>
    <scope>NUCLEOTIDE SEQUENCE [LARGE SCALE GENOMIC DNA]</scope>
    <source>
        <strain>NG80-2</strain>
    </source>
</reference>
<evidence type="ECO:0000255" key="1">
    <source>
        <dbReference type="HAMAP-Rule" id="MF_00050"/>
    </source>
</evidence>
<comment type="function">
    <text evidence="1">Associates with the EF-Tu.GDP complex and induces the exchange of GDP to GTP. It remains bound to the aminoacyl-tRNA.EF-Tu.GTP complex up to the GTP hydrolysis stage on the ribosome.</text>
</comment>
<comment type="subcellular location">
    <subcellularLocation>
        <location evidence="1">Cytoplasm</location>
    </subcellularLocation>
</comment>
<comment type="similarity">
    <text evidence="1">Belongs to the EF-Ts family.</text>
</comment>